<proteinExistence type="evidence at transcript level"/>
<accession>Q8S1N1</accession>
<comment type="function">
    <text evidence="1">Magnesium transporter that may mediate the influx of magnesium.</text>
</comment>
<comment type="subcellular location">
    <subcellularLocation>
        <location evidence="1">Membrane</location>
        <topology evidence="1">Multi-pass membrane protein</topology>
    </subcellularLocation>
</comment>
<comment type="similarity">
    <text evidence="4">Belongs to the CorA metal ion transporter (MIT) (TC 1.A.35.5) family.</text>
</comment>
<organism>
    <name type="scientific">Oryza sativa subsp. japonica</name>
    <name type="common">Rice</name>
    <dbReference type="NCBI Taxonomy" id="39947"/>
    <lineage>
        <taxon>Eukaryota</taxon>
        <taxon>Viridiplantae</taxon>
        <taxon>Streptophyta</taxon>
        <taxon>Embryophyta</taxon>
        <taxon>Tracheophyta</taxon>
        <taxon>Spermatophyta</taxon>
        <taxon>Magnoliopsida</taxon>
        <taxon>Liliopsida</taxon>
        <taxon>Poales</taxon>
        <taxon>Poaceae</taxon>
        <taxon>BOP clade</taxon>
        <taxon>Oryzoideae</taxon>
        <taxon>Oryzeae</taxon>
        <taxon>Oryzinae</taxon>
        <taxon>Oryza</taxon>
        <taxon>Oryza sativa</taxon>
    </lineage>
</organism>
<dbReference type="EMBL" id="AP003286">
    <property type="protein sequence ID" value="BAB89805.1"/>
    <property type="molecule type" value="Genomic_DNA"/>
</dbReference>
<dbReference type="EMBL" id="AP008207">
    <property type="protein sequence ID" value="BAF06838.1"/>
    <property type="molecule type" value="Genomic_DNA"/>
</dbReference>
<dbReference type="EMBL" id="AP014957">
    <property type="protein sequence ID" value="BAS75420.1"/>
    <property type="molecule type" value="Genomic_DNA"/>
</dbReference>
<dbReference type="EMBL" id="CM000138">
    <property type="protein sequence ID" value="EAZ14294.1"/>
    <property type="molecule type" value="Genomic_DNA"/>
</dbReference>
<dbReference type="EMBL" id="AK073453">
    <property type="status" value="NOT_ANNOTATED_CDS"/>
    <property type="molecule type" value="mRNA"/>
</dbReference>
<dbReference type="RefSeq" id="XP_015622325.1">
    <property type="nucleotide sequence ID" value="XM_015766839.1"/>
</dbReference>
<dbReference type="SMR" id="Q8S1N1"/>
<dbReference type="FunCoup" id="Q8S1N1">
    <property type="interactions" value="675"/>
</dbReference>
<dbReference type="STRING" id="39947.Q8S1N1"/>
<dbReference type="PaxDb" id="39947-Q8S1N1"/>
<dbReference type="EnsemblPlants" id="Os01t0869200-01">
    <property type="protein sequence ID" value="Os01t0869200-01"/>
    <property type="gene ID" value="Os01g0869200"/>
</dbReference>
<dbReference type="Gramene" id="Os01t0869200-01">
    <property type="protein sequence ID" value="Os01t0869200-01"/>
    <property type="gene ID" value="Os01g0869200"/>
</dbReference>
<dbReference type="KEGG" id="dosa:Os01g0869200"/>
<dbReference type="eggNOG" id="KOG2662">
    <property type="taxonomic scope" value="Eukaryota"/>
</dbReference>
<dbReference type="HOGENOM" id="CLU_034694_0_0_1"/>
<dbReference type="InParanoid" id="Q8S1N1"/>
<dbReference type="OMA" id="FWETTCG"/>
<dbReference type="OrthoDB" id="10251508at2759"/>
<dbReference type="PlantReactome" id="R-OSA-9639136">
    <property type="pathway name" value="Response to Aluminum stress"/>
</dbReference>
<dbReference type="Proteomes" id="UP000000763">
    <property type="component" value="Chromosome 1"/>
</dbReference>
<dbReference type="Proteomes" id="UP000007752">
    <property type="component" value="Chromosome 1"/>
</dbReference>
<dbReference type="Proteomes" id="UP000059680">
    <property type="component" value="Chromosome 1"/>
</dbReference>
<dbReference type="ExpressionAtlas" id="Q8S1N1">
    <property type="expression patterns" value="baseline and differential"/>
</dbReference>
<dbReference type="GO" id="GO:0016020">
    <property type="term" value="C:membrane"/>
    <property type="evidence" value="ECO:0007669"/>
    <property type="project" value="UniProtKB-SubCell"/>
</dbReference>
<dbReference type="GO" id="GO:0015095">
    <property type="term" value="F:magnesium ion transmembrane transporter activity"/>
    <property type="evidence" value="ECO:0000318"/>
    <property type="project" value="GO_Central"/>
</dbReference>
<dbReference type="GO" id="GO:0015693">
    <property type="term" value="P:magnesium ion transport"/>
    <property type="evidence" value="ECO:0000318"/>
    <property type="project" value="GO_Central"/>
</dbReference>
<dbReference type="CDD" id="cd12823">
    <property type="entry name" value="Mrs2_Mfm1p-like"/>
    <property type="match status" value="1"/>
</dbReference>
<dbReference type="FunFam" id="2.40.128.330:FF:000001">
    <property type="entry name" value="Magnesium transporter MRS2-1"/>
    <property type="match status" value="1"/>
</dbReference>
<dbReference type="Gene3D" id="2.40.128.330">
    <property type="match status" value="1"/>
</dbReference>
<dbReference type="Gene3D" id="1.20.58.340">
    <property type="entry name" value="Magnesium transport protein CorA, transmembrane region"/>
    <property type="match status" value="1"/>
</dbReference>
<dbReference type="InterPro" id="IPR039204">
    <property type="entry name" value="MRS2-like"/>
</dbReference>
<dbReference type="PANTHER" id="PTHR13890:SF34">
    <property type="entry name" value="MAGNESIUM TRANSPORTER MRS2-E"/>
    <property type="match status" value="1"/>
</dbReference>
<dbReference type="PANTHER" id="PTHR13890">
    <property type="entry name" value="RNA SPLICING PROTEIN MRS2, MITOCHONDRIAL"/>
    <property type="match status" value="1"/>
</dbReference>
<dbReference type="Pfam" id="PF22099">
    <property type="entry name" value="MRS2-like"/>
    <property type="match status" value="2"/>
</dbReference>
<gene>
    <name type="primary">MRS2-E</name>
    <name type="ordered locus">Os01g0869200</name>
    <name type="ordered locus">LOC_Os01g64890</name>
    <name type="ORF">OsJ_04219</name>
    <name type="ORF">P0677H08.30</name>
</gene>
<keyword id="KW-0175">Coiled coil</keyword>
<keyword id="KW-0406">Ion transport</keyword>
<keyword id="KW-0460">Magnesium</keyword>
<keyword id="KW-0472">Membrane</keyword>
<keyword id="KW-1185">Reference proteome</keyword>
<keyword id="KW-0812">Transmembrane</keyword>
<keyword id="KW-1133">Transmembrane helix</keyword>
<keyword id="KW-0813">Transport</keyword>
<protein>
    <recommendedName>
        <fullName>Magnesium transporter MRS2-E</fullName>
    </recommendedName>
</protein>
<name>MRS2E_ORYSJ</name>
<feature type="chain" id="PRO_0000394273" description="Magnesium transporter MRS2-E">
    <location>
        <begin position="1"/>
        <end position="418"/>
    </location>
</feature>
<feature type="transmembrane region" description="Helical" evidence="2">
    <location>
        <begin position="344"/>
        <end position="364"/>
    </location>
</feature>
<feature type="transmembrane region" description="Helical" evidence="2">
    <location>
        <begin position="389"/>
        <end position="409"/>
    </location>
</feature>
<feature type="region of interest" description="Disordered" evidence="3">
    <location>
        <begin position="119"/>
        <end position="146"/>
    </location>
</feature>
<feature type="region of interest" description="Disordered" evidence="3">
    <location>
        <begin position="258"/>
        <end position="287"/>
    </location>
</feature>
<feature type="coiled-coil region" evidence="2">
    <location>
        <begin position="166"/>
        <end position="232"/>
    </location>
</feature>
<feature type="short sequence motif" description="Required for magnesium transport activity">
    <location>
        <begin position="365"/>
        <end position="367"/>
    </location>
</feature>
<feature type="compositionally biased region" description="Basic and acidic residues" evidence="3">
    <location>
        <begin position="258"/>
        <end position="268"/>
    </location>
</feature>
<feature type="compositionally biased region" description="Acidic residues" evidence="3">
    <location>
        <begin position="269"/>
        <end position="280"/>
    </location>
</feature>
<feature type="sequence conflict" description="In Ref. 6; AK073453." evidence="4" ref="6">
    <original>H</original>
    <variation>R</variation>
    <location>
        <position position="204"/>
    </location>
</feature>
<reference key="1">
    <citation type="journal article" date="2002" name="Nature">
        <title>The genome sequence and structure of rice chromosome 1.</title>
        <authorList>
            <person name="Sasaki T."/>
            <person name="Matsumoto T."/>
            <person name="Yamamoto K."/>
            <person name="Sakata K."/>
            <person name="Baba T."/>
            <person name="Katayose Y."/>
            <person name="Wu J."/>
            <person name="Niimura Y."/>
            <person name="Cheng Z."/>
            <person name="Nagamura Y."/>
            <person name="Antonio B.A."/>
            <person name="Kanamori H."/>
            <person name="Hosokawa S."/>
            <person name="Masukawa M."/>
            <person name="Arikawa K."/>
            <person name="Chiden Y."/>
            <person name="Hayashi M."/>
            <person name="Okamoto M."/>
            <person name="Ando T."/>
            <person name="Aoki H."/>
            <person name="Arita K."/>
            <person name="Hamada M."/>
            <person name="Harada C."/>
            <person name="Hijishita S."/>
            <person name="Honda M."/>
            <person name="Ichikawa Y."/>
            <person name="Idonuma A."/>
            <person name="Iijima M."/>
            <person name="Ikeda M."/>
            <person name="Ikeno M."/>
            <person name="Ito S."/>
            <person name="Ito T."/>
            <person name="Ito Y."/>
            <person name="Ito Y."/>
            <person name="Iwabuchi A."/>
            <person name="Kamiya K."/>
            <person name="Karasawa W."/>
            <person name="Katagiri S."/>
            <person name="Kikuta A."/>
            <person name="Kobayashi N."/>
            <person name="Kono I."/>
            <person name="Machita K."/>
            <person name="Maehara T."/>
            <person name="Mizuno H."/>
            <person name="Mizubayashi T."/>
            <person name="Mukai Y."/>
            <person name="Nagasaki H."/>
            <person name="Nakashima M."/>
            <person name="Nakama Y."/>
            <person name="Nakamichi Y."/>
            <person name="Nakamura M."/>
            <person name="Namiki N."/>
            <person name="Negishi M."/>
            <person name="Ohta I."/>
            <person name="Ono N."/>
            <person name="Saji S."/>
            <person name="Sakai K."/>
            <person name="Shibata M."/>
            <person name="Shimokawa T."/>
            <person name="Shomura A."/>
            <person name="Song J."/>
            <person name="Takazaki Y."/>
            <person name="Terasawa K."/>
            <person name="Tsuji K."/>
            <person name="Waki K."/>
            <person name="Yamagata H."/>
            <person name="Yamane H."/>
            <person name="Yoshiki S."/>
            <person name="Yoshihara R."/>
            <person name="Yukawa K."/>
            <person name="Zhong H."/>
            <person name="Iwama H."/>
            <person name="Endo T."/>
            <person name="Ito H."/>
            <person name="Hahn J.H."/>
            <person name="Kim H.-I."/>
            <person name="Eun M.-Y."/>
            <person name="Yano M."/>
            <person name="Jiang J."/>
            <person name="Gojobori T."/>
        </authorList>
    </citation>
    <scope>NUCLEOTIDE SEQUENCE [LARGE SCALE GENOMIC DNA]</scope>
    <source>
        <strain>cv. Nipponbare</strain>
    </source>
</reference>
<reference key="2">
    <citation type="journal article" date="2005" name="Nature">
        <title>The map-based sequence of the rice genome.</title>
        <authorList>
            <consortium name="International rice genome sequencing project (IRGSP)"/>
        </authorList>
    </citation>
    <scope>NUCLEOTIDE SEQUENCE [LARGE SCALE GENOMIC DNA]</scope>
    <source>
        <strain>cv. Nipponbare</strain>
    </source>
</reference>
<reference key="3">
    <citation type="journal article" date="2008" name="Nucleic Acids Res.">
        <title>The rice annotation project database (RAP-DB): 2008 update.</title>
        <authorList>
            <consortium name="The rice annotation project (RAP)"/>
        </authorList>
    </citation>
    <scope>GENOME REANNOTATION</scope>
    <source>
        <strain>cv. Nipponbare</strain>
    </source>
</reference>
<reference key="4">
    <citation type="journal article" date="2013" name="Rice">
        <title>Improvement of the Oryza sativa Nipponbare reference genome using next generation sequence and optical map data.</title>
        <authorList>
            <person name="Kawahara Y."/>
            <person name="de la Bastide M."/>
            <person name="Hamilton J.P."/>
            <person name="Kanamori H."/>
            <person name="McCombie W.R."/>
            <person name="Ouyang S."/>
            <person name="Schwartz D.C."/>
            <person name="Tanaka T."/>
            <person name="Wu J."/>
            <person name="Zhou S."/>
            <person name="Childs K.L."/>
            <person name="Davidson R.M."/>
            <person name="Lin H."/>
            <person name="Quesada-Ocampo L."/>
            <person name="Vaillancourt B."/>
            <person name="Sakai H."/>
            <person name="Lee S.S."/>
            <person name="Kim J."/>
            <person name="Numa H."/>
            <person name="Itoh T."/>
            <person name="Buell C.R."/>
            <person name="Matsumoto T."/>
        </authorList>
    </citation>
    <scope>GENOME REANNOTATION</scope>
    <source>
        <strain>cv. Nipponbare</strain>
    </source>
</reference>
<reference key="5">
    <citation type="journal article" date="2005" name="PLoS Biol.">
        <title>The genomes of Oryza sativa: a history of duplications.</title>
        <authorList>
            <person name="Yu J."/>
            <person name="Wang J."/>
            <person name="Lin W."/>
            <person name="Li S."/>
            <person name="Li H."/>
            <person name="Zhou J."/>
            <person name="Ni P."/>
            <person name="Dong W."/>
            <person name="Hu S."/>
            <person name="Zeng C."/>
            <person name="Zhang J."/>
            <person name="Zhang Y."/>
            <person name="Li R."/>
            <person name="Xu Z."/>
            <person name="Li S."/>
            <person name="Li X."/>
            <person name="Zheng H."/>
            <person name="Cong L."/>
            <person name="Lin L."/>
            <person name="Yin J."/>
            <person name="Geng J."/>
            <person name="Li G."/>
            <person name="Shi J."/>
            <person name="Liu J."/>
            <person name="Lv H."/>
            <person name="Li J."/>
            <person name="Wang J."/>
            <person name="Deng Y."/>
            <person name="Ran L."/>
            <person name="Shi X."/>
            <person name="Wang X."/>
            <person name="Wu Q."/>
            <person name="Li C."/>
            <person name="Ren X."/>
            <person name="Wang J."/>
            <person name="Wang X."/>
            <person name="Li D."/>
            <person name="Liu D."/>
            <person name="Zhang X."/>
            <person name="Ji Z."/>
            <person name="Zhao W."/>
            <person name="Sun Y."/>
            <person name="Zhang Z."/>
            <person name="Bao J."/>
            <person name="Han Y."/>
            <person name="Dong L."/>
            <person name="Ji J."/>
            <person name="Chen P."/>
            <person name="Wu S."/>
            <person name="Liu J."/>
            <person name="Xiao Y."/>
            <person name="Bu D."/>
            <person name="Tan J."/>
            <person name="Yang L."/>
            <person name="Ye C."/>
            <person name="Zhang J."/>
            <person name="Xu J."/>
            <person name="Zhou Y."/>
            <person name="Yu Y."/>
            <person name="Zhang B."/>
            <person name="Zhuang S."/>
            <person name="Wei H."/>
            <person name="Liu B."/>
            <person name="Lei M."/>
            <person name="Yu H."/>
            <person name="Li Y."/>
            <person name="Xu H."/>
            <person name="Wei S."/>
            <person name="He X."/>
            <person name="Fang L."/>
            <person name="Zhang Z."/>
            <person name="Zhang Y."/>
            <person name="Huang X."/>
            <person name="Su Z."/>
            <person name="Tong W."/>
            <person name="Li J."/>
            <person name="Tong Z."/>
            <person name="Li S."/>
            <person name="Ye J."/>
            <person name="Wang L."/>
            <person name="Fang L."/>
            <person name="Lei T."/>
            <person name="Chen C.-S."/>
            <person name="Chen H.-C."/>
            <person name="Xu Z."/>
            <person name="Li H."/>
            <person name="Huang H."/>
            <person name="Zhang F."/>
            <person name="Xu H."/>
            <person name="Li N."/>
            <person name="Zhao C."/>
            <person name="Li S."/>
            <person name="Dong L."/>
            <person name="Huang Y."/>
            <person name="Li L."/>
            <person name="Xi Y."/>
            <person name="Qi Q."/>
            <person name="Li W."/>
            <person name="Zhang B."/>
            <person name="Hu W."/>
            <person name="Zhang Y."/>
            <person name="Tian X."/>
            <person name="Jiao Y."/>
            <person name="Liang X."/>
            <person name="Jin J."/>
            <person name="Gao L."/>
            <person name="Zheng W."/>
            <person name="Hao B."/>
            <person name="Liu S.-M."/>
            <person name="Wang W."/>
            <person name="Yuan L."/>
            <person name="Cao M."/>
            <person name="McDermott J."/>
            <person name="Samudrala R."/>
            <person name="Wang J."/>
            <person name="Wong G.K.-S."/>
            <person name="Yang H."/>
        </authorList>
    </citation>
    <scope>NUCLEOTIDE SEQUENCE [LARGE SCALE GENOMIC DNA]</scope>
    <source>
        <strain>cv. Nipponbare</strain>
    </source>
</reference>
<reference key="6">
    <citation type="journal article" date="2003" name="Science">
        <title>Collection, mapping, and annotation of over 28,000 cDNA clones from japonica rice.</title>
        <authorList>
            <consortium name="The rice full-length cDNA consortium"/>
        </authorList>
    </citation>
    <scope>NUCLEOTIDE SEQUENCE [LARGE SCALE MRNA]</scope>
    <source>
        <strain>cv. Nipponbare</strain>
    </source>
</reference>
<reference key="7">
    <citation type="journal article" date="2009" name="Plant Cell">
        <title>A root-expressed magnesium transporter of the MRS2/MGT gene family in Arabidopsis thaliana allows for growth in low-Mg2+ environments.</title>
        <authorList>
            <person name="Gebert M."/>
            <person name="Meschenmoser K."/>
            <person name="Svidova S."/>
            <person name="Weghuber J."/>
            <person name="Schweyen R."/>
            <person name="Eifler K."/>
            <person name="Lenz H."/>
            <person name="Weyand K."/>
            <person name="Knoop V."/>
        </authorList>
    </citation>
    <scope>GENE FAMILY</scope>
</reference>
<sequence>MERRAQPVSAAVAPVTGRRKGAAASRKWMVVPAVGEERRVEFGKHQIMKMTGLPGRDLRVLDPVLSYPSTILGRDRAIVVRLQGVKAIITATEVLVPDHDDVLLASFLLDLRSRLSLPDAAPSTNPAAADRGNGTEQGDQGSVPGLAISGAGNAKIPPFEFKVLEVCLEHACKDLESQTRSLEKEAYPALDKLGSKVSTLNLDHVRNLKSRMVDLSGRVQKIRDELEHLLDDDMDMSEMYLTRKLSFQGLSGSLSRADSHKYASVDHDDDREEEDHDDETESGRESSVYVKPDIEELEMLLEAYFVQIDGTLNTLYHIREYADDTEDYINIMLDEKQNQLLQMGVMLTTATVVVTAGIVVVSLFGMNIHIDLMKDPETPEMVRMSNMHFWETTFGTVAGCIAIYLLAIYAGRKSKILQ</sequence>
<evidence type="ECO:0000250" key="1"/>
<evidence type="ECO:0000255" key="2"/>
<evidence type="ECO:0000256" key="3">
    <source>
        <dbReference type="SAM" id="MobiDB-lite"/>
    </source>
</evidence>
<evidence type="ECO:0000305" key="4"/>